<accession>P0AA95</accession>
<accession>P23838</accession>
<accession>P75654</accession>
<sequence>MKTFFRTVLFGSLMAVCANSYALSESEAEDMADLTAVFVFLKNDCGYQNLPNGQIRRALVFFAQQNQWDLSNYDTFDMKALGEDSYRDLSGIGIPVAKKCKALARDSLSLLAYVK</sequence>
<evidence type="ECO:0000255" key="1"/>
<proteinExistence type="inferred from homology"/>
<feature type="signal peptide" evidence="1">
    <location>
        <begin position="1"/>
        <end position="20"/>
    </location>
</feature>
<feature type="chain" id="PRO_0000013780" description="Uncharacterized protein YacC">
    <location>
        <begin position="21"/>
        <end position="115"/>
    </location>
</feature>
<protein>
    <recommendedName>
        <fullName>Uncharacterized protein YacC</fullName>
    </recommendedName>
</protein>
<reference key="1">
    <citation type="journal article" date="1989" name="J. Bacteriol.">
        <title>Spermidine biosynthesis in Escherichia coli: promoter and termination regions of the speED operon.</title>
        <authorList>
            <person name="Xie Q.W."/>
            <person name="Tabor C.W."/>
            <person name="Tabor H."/>
        </authorList>
    </citation>
    <scope>NUCLEOTIDE SEQUENCE [GENOMIC DNA]</scope>
</reference>
<reference key="2">
    <citation type="journal article" date="1994" name="Nucleic Acids Res.">
        <title>Systematic sequencing of the Escherichia coli genome: analysis of the 2.4-4.1 min (110,917-193,643 bp) region.</title>
        <authorList>
            <person name="Fujita N."/>
            <person name="Mori H."/>
            <person name="Yura T."/>
            <person name="Ishihama A."/>
        </authorList>
    </citation>
    <scope>NUCLEOTIDE SEQUENCE [LARGE SCALE GENOMIC DNA]</scope>
    <source>
        <strain>K12 / W3110 / ATCC 27325 / DSM 5911</strain>
    </source>
</reference>
<reference key="3">
    <citation type="journal article" date="1997" name="Science">
        <title>The complete genome sequence of Escherichia coli K-12.</title>
        <authorList>
            <person name="Blattner F.R."/>
            <person name="Plunkett G. III"/>
            <person name="Bloch C.A."/>
            <person name="Perna N.T."/>
            <person name="Burland V."/>
            <person name="Riley M."/>
            <person name="Collado-Vides J."/>
            <person name="Glasner J.D."/>
            <person name="Rode C.K."/>
            <person name="Mayhew G.F."/>
            <person name="Gregor J."/>
            <person name="Davis N.W."/>
            <person name="Kirkpatrick H.A."/>
            <person name="Goeden M.A."/>
            <person name="Rose D.J."/>
            <person name="Mau B."/>
            <person name="Shao Y."/>
        </authorList>
    </citation>
    <scope>NUCLEOTIDE SEQUENCE [LARGE SCALE GENOMIC DNA]</scope>
    <source>
        <strain>K12 / MG1655 / ATCC 47076</strain>
    </source>
</reference>
<reference key="4">
    <citation type="journal article" date="2006" name="Mol. Syst. Biol.">
        <title>Highly accurate genome sequences of Escherichia coli K-12 strains MG1655 and W3110.</title>
        <authorList>
            <person name="Hayashi K."/>
            <person name="Morooka N."/>
            <person name="Yamamoto Y."/>
            <person name="Fujita K."/>
            <person name="Isono K."/>
            <person name="Choi S."/>
            <person name="Ohtsubo E."/>
            <person name="Baba T."/>
            <person name="Wanner B.L."/>
            <person name="Mori H."/>
            <person name="Horiuchi T."/>
        </authorList>
    </citation>
    <scope>NUCLEOTIDE SEQUENCE [LARGE SCALE GENOMIC DNA]</scope>
    <source>
        <strain>K12 / W3110 / ATCC 27325 / DSM 5911</strain>
    </source>
</reference>
<keyword id="KW-1185">Reference proteome</keyword>
<keyword id="KW-0732">Signal</keyword>
<name>YACC_ECOLI</name>
<dbReference type="EMBL" id="J02804">
    <property type="protein sequence ID" value="AAA24642.1"/>
    <property type="molecule type" value="Genomic_DNA"/>
</dbReference>
<dbReference type="EMBL" id="U00096">
    <property type="protein sequence ID" value="AAC73233.2"/>
    <property type="molecule type" value="Genomic_DNA"/>
</dbReference>
<dbReference type="EMBL" id="AP009048">
    <property type="protein sequence ID" value="BAB96696.1"/>
    <property type="molecule type" value="Genomic_DNA"/>
</dbReference>
<dbReference type="RefSeq" id="NP_414664.4">
    <property type="nucleotide sequence ID" value="NC_000913.3"/>
</dbReference>
<dbReference type="RefSeq" id="WP_001295568.1">
    <property type="nucleotide sequence ID" value="NZ_STEB01000010.1"/>
</dbReference>
<dbReference type="SMR" id="P0AA95"/>
<dbReference type="BioGRID" id="4263042">
    <property type="interactions" value="5"/>
</dbReference>
<dbReference type="FunCoup" id="P0AA95">
    <property type="interactions" value="10"/>
</dbReference>
<dbReference type="IntAct" id="P0AA95">
    <property type="interactions" value="1"/>
</dbReference>
<dbReference type="STRING" id="511145.b0122"/>
<dbReference type="TCDB" id="8.A.2.1.3">
    <property type="family name" value="the secretin auxiliary lipoprotein (sal) family"/>
</dbReference>
<dbReference type="PaxDb" id="511145-b0122"/>
<dbReference type="EnsemblBacteria" id="AAC73233">
    <property type="protein sequence ID" value="AAC73233"/>
    <property type="gene ID" value="b0122"/>
</dbReference>
<dbReference type="GeneID" id="948472"/>
<dbReference type="KEGG" id="ecj:JW0118"/>
<dbReference type="KEGG" id="eco:b0122"/>
<dbReference type="KEGG" id="ecoc:C3026_00515"/>
<dbReference type="PATRIC" id="fig|511145.12.peg.124"/>
<dbReference type="EchoBASE" id="EB1081"/>
<dbReference type="eggNOG" id="ENOG5031UDJ">
    <property type="taxonomic scope" value="Bacteria"/>
</dbReference>
<dbReference type="HOGENOM" id="CLU_142137_0_0_6"/>
<dbReference type="InParanoid" id="P0AA95"/>
<dbReference type="OMA" id="QNRWDLT"/>
<dbReference type="OrthoDB" id="6414804at2"/>
<dbReference type="PhylomeDB" id="P0AA95"/>
<dbReference type="BioCyc" id="EcoCyc:EG11089-MONOMER"/>
<dbReference type="PRO" id="PR:P0AA95"/>
<dbReference type="Proteomes" id="UP000000625">
    <property type="component" value="Chromosome"/>
</dbReference>
<dbReference type="Gene3D" id="1.20.58.1630">
    <property type="entry name" value="Chaperone lipoprotein PulS/OutS"/>
    <property type="match status" value="1"/>
</dbReference>
<dbReference type="InterPro" id="IPR019114">
    <property type="entry name" value="Chap_lipoprot_PulS/OutS-like"/>
</dbReference>
<dbReference type="InterPro" id="IPR038432">
    <property type="entry name" value="PulS/OutS-like_sf"/>
</dbReference>
<dbReference type="NCBIfam" id="NF037975">
    <property type="entry name" value="pilot_rel_YacC"/>
    <property type="match status" value="1"/>
</dbReference>
<dbReference type="Pfam" id="PF09691">
    <property type="entry name" value="T2SS_PulS_OutS"/>
    <property type="match status" value="1"/>
</dbReference>
<gene>
    <name type="primary">yacC</name>
    <name type="ordered locus">b0122</name>
    <name type="ordered locus">JW0118</name>
</gene>
<organism>
    <name type="scientific">Escherichia coli (strain K12)</name>
    <dbReference type="NCBI Taxonomy" id="83333"/>
    <lineage>
        <taxon>Bacteria</taxon>
        <taxon>Pseudomonadati</taxon>
        <taxon>Pseudomonadota</taxon>
        <taxon>Gammaproteobacteria</taxon>
        <taxon>Enterobacterales</taxon>
        <taxon>Enterobacteriaceae</taxon>
        <taxon>Escherichia</taxon>
    </lineage>
</organism>